<protein>
    <recommendedName>
        <fullName>Putative nickel-responsive regulator 2</fullName>
    </recommendedName>
</protein>
<proteinExistence type="inferred from homology"/>
<organism>
    <name type="scientific">Methanosarcina acetivorans (strain ATCC 35395 / DSM 2834 / JCM 12185 / C2A)</name>
    <dbReference type="NCBI Taxonomy" id="188937"/>
    <lineage>
        <taxon>Archaea</taxon>
        <taxon>Methanobacteriati</taxon>
        <taxon>Methanobacteriota</taxon>
        <taxon>Stenosarchaea group</taxon>
        <taxon>Methanomicrobia</taxon>
        <taxon>Methanosarcinales</taxon>
        <taxon>Methanosarcinaceae</taxon>
        <taxon>Methanosarcina</taxon>
    </lineage>
</organism>
<feature type="chain" id="PRO_0000139300" description="Putative nickel-responsive regulator 2">
    <location>
        <begin position="1"/>
        <end position="140"/>
    </location>
</feature>
<feature type="binding site" evidence="1">
    <location>
        <position position="81"/>
    </location>
    <ligand>
        <name>Ni(2+)</name>
        <dbReference type="ChEBI" id="CHEBI:49786"/>
    </ligand>
</feature>
<feature type="binding site" evidence="1">
    <location>
        <position position="92"/>
    </location>
    <ligand>
        <name>Ni(2+)</name>
        <dbReference type="ChEBI" id="CHEBI:49786"/>
    </ligand>
</feature>
<feature type="binding site" evidence="1">
    <location>
        <position position="94"/>
    </location>
    <ligand>
        <name>Ni(2+)</name>
        <dbReference type="ChEBI" id="CHEBI:49786"/>
    </ligand>
</feature>
<feature type="binding site" evidence="1">
    <location>
        <position position="100"/>
    </location>
    <ligand>
        <name>Ni(2+)</name>
        <dbReference type="ChEBI" id="CHEBI:49786"/>
    </ligand>
</feature>
<dbReference type="EMBL" id="AE010299">
    <property type="protein sequence ID" value="AAM06193.1"/>
    <property type="molecule type" value="Genomic_DNA"/>
</dbReference>
<dbReference type="RefSeq" id="WP_011022768.1">
    <property type="nucleotide sequence ID" value="NC_003552.1"/>
</dbReference>
<dbReference type="SMR" id="Q8TM54"/>
<dbReference type="FunCoup" id="Q8TM54">
    <property type="interactions" value="1"/>
</dbReference>
<dbReference type="EnsemblBacteria" id="AAM06193">
    <property type="protein sequence ID" value="AAM06193"/>
    <property type="gene ID" value="MA_2814"/>
</dbReference>
<dbReference type="GeneID" id="1474710"/>
<dbReference type="KEGG" id="mac:MA_2814"/>
<dbReference type="HOGENOM" id="CLU_113319_1_2_2"/>
<dbReference type="InParanoid" id="Q8TM54"/>
<dbReference type="OrthoDB" id="25654at2157"/>
<dbReference type="PhylomeDB" id="Q8TM54"/>
<dbReference type="Proteomes" id="UP000002487">
    <property type="component" value="Chromosome"/>
</dbReference>
<dbReference type="GO" id="GO:0003677">
    <property type="term" value="F:DNA binding"/>
    <property type="evidence" value="ECO:0000318"/>
    <property type="project" value="GO_Central"/>
</dbReference>
<dbReference type="GO" id="GO:0003700">
    <property type="term" value="F:DNA-binding transcription factor activity"/>
    <property type="evidence" value="ECO:0007669"/>
    <property type="project" value="UniProtKB-UniRule"/>
</dbReference>
<dbReference type="GO" id="GO:0016151">
    <property type="term" value="F:nickel cation binding"/>
    <property type="evidence" value="ECO:0007669"/>
    <property type="project" value="UniProtKB-UniRule"/>
</dbReference>
<dbReference type="GO" id="GO:0006355">
    <property type="term" value="P:regulation of DNA-templated transcription"/>
    <property type="evidence" value="ECO:0000318"/>
    <property type="project" value="GO_Central"/>
</dbReference>
<dbReference type="GO" id="GO:0010045">
    <property type="term" value="P:response to nickel cation"/>
    <property type="evidence" value="ECO:0007669"/>
    <property type="project" value="InterPro"/>
</dbReference>
<dbReference type="CDD" id="cd22231">
    <property type="entry name" value="RHH_NikR_HicB-like"/>
    <property type="match status" value="1"/>
</dbReference>
<dbReference type="Gene3D" id="3.30.70.1150">
    <property type="entry name" value="ACT-like. Chain A, domain 2"/>
    <property type="match status" value="1"/>
</dbReference>
<dbReference type="Gene3D" id="1.10.1220.10">
    <property type="entry name" value="Met repressor-like"/>
    <property type="match status" value="1"/>
</dbReference>
<dbReference type="HAMAP" id="MF_00476">
    <property type="entry name" value="NikR"/>
    <property type="match status" value="1"/>
</dbReference>
<dbReference type="InterPro" id="IPR027271">
    <property type="entry name" value="Acetolactate_synth/TF_NikR_C"/>
</dbReference>
<dbReference type="InterPro" id="IPR045865">
    <property type="entry name" value="ACT-like_dom_sf"/>
</dbReference>
<dbReference type="InterPro" id="IPR013321">
    <property type="entry name" value="Arc_rbn_hlx_hlx"/>
</dbReference>
<dbReference type="InterPro" id="IPR002145">
    <property type="entry name" value="CopG"/>
</dbReference>
<dbReference type="InterPro" id="IPR050192">
    <property type="entry name" value="CopG/NikR_regulator"/>
</dbReference>
<dbReference type="InterPro" id="IPR022988">
    <property type="entry name" value="Ni_resp_reg_NikR"/>
</dbReference>
<dbReference type="InterPro" id="IPR010985">
    <property type="entry name" value="Ribbon_hlx_hlx"/>
</dbReference>
<dbReference type="InterPro" id="IPR014864">
    <property type="entry name" value="TF_NikR_Ni-bd_C"/>
</dbReference>
<dbReference type="NCBIfam" id="NF002169">
    <property type="entry name" value="PRK01002.1"/>
    <property type="match status" value="1"/>
</dbReference>
<dbReference type="NCBIfam" id="NF002815">
    <property type="entry name" value="PRK02967.1"/>
    <property type="match status" value="1"/>
</dbReference>
<dbReference type="NCBIfam" id="NF003381">
    <property type="entry name" value="PRK04460.1"/>
    <property type="match status" value="1"/>
</dbReference>
<dbReference type="PANTHER" id="PTHR34719">
    <property type="entry name" value="NICKEL-RESPONSIVE REGULATOR"/>
    <property type="match status" value="1"/>
</dbReference>
<dbReference type="PANTHER" id="PTHR34719:SF2">
    <property type="entry name" value="NICKEL-RESPONSIVE REGULATOR"/>
    <property type="match status" value="1"/>
</dbReference>
<dbReference type="Pfam" id="PF08753">
    <property type="entry name" value="NikR_C"/>
    <property type="match status" value="1"/>
</dbReference>
<dbReference type="Pfam" id="PF01402">
    <property type="entry name" value="RHH_1"/>
    <property type="match status" value="1"/>
</dbReference>
<dbReference type="SUPFAM" id="SSF55021">
    <property type="entry name" value="ACT-like"/>
    <property type="match status" value="1"/>
</dbReference>
<dbReference type="SUPFAM" id="SSF47598">
    <property type="entry name" value="Ribbon-helix-helix"/>
    <property type="match status" value="1"/>
</dbReference>
<gene>
    <name type="ordered locus">MA_2814</name>
</gene>
<reference key="1">
    <citation type="journal article" date="2002" name="Genome Res.">
        <title>The genome of Methanosarcina acetivorans reveals extensive metabolic and physiological diversity.</title>
        <authorList>
            <person name="Galagan J.E."/>
            <person name="Nusbaum C."/>
            <person name="Roy A."/>
            <person name="Endrizzi M.G."/>
            <person name="Macdonald P."/>
            <person name="FitzHugh W."/>
            <person name="Calvo S."/>
            <person name="Engels R."/>
            <person name="Smirnov S."/>
            <person name="Atnoor D."/>
            <person name="Brown A."/>
            <person name="Allen N."/>
            <person name="Naylor J."/>
            <person name="Stange-Thomann N."/>
            <person name="DeArellano K."/>
            <person name="Johnson R."/>
            <person name="Linton L."/>
            <person name="McEwan P."/>
            <person name="McKernan K."/>
            <person name="Talamas J."/>
            <person name="Tirrell A."/>
            <person name="Ye W."/>
            <person name="Zimmer A."/>
            <person name="Barber R.D."/>
            <person name="Cann I."/>
            <person name="Graham D.E."/>
            <person name="Grahame D.A."/>
            <person name="Guss A.M."/>
            <person name="Hedderich R."/>
            <person name="Ingram-Smith C."/>
            <person name="Kuettner H.C."/>
            <person name="Krzycki J.A."/>
            <person name="Leigh J.A."/>
            <person name="Li W."/>
            <person name="Liu J."/>
            <person name="Mukhopadhyay B."/>
            <person name="Reeve J.N."/>
            <person name="Smith K."/>
            <person name="Springer T.A."/>
            <person name="Umayam L.A."/>
            <person name="White O."/>
            <person name="White R.H."/>
            <person name="de Macario E.C."/>
            <person name="Ferry J.G."/>
            <person name="Jarrell K.F."/>
            <person name="Jing H."/>
            <person name="Macario A.J.L."/>
            <person name="Paulsen I.T."/>
            <person name="Pritchett M."/>
            <person name="Sowers K.R."/>
            <person name="Swanson R.V."/>
            <person name="Zinder S.H."/>
            <person name="Lander E."/>
            <person name="Metcalf W.W."/>
            <person name="Birren B."/>
        </authorList>
    </citation>
    <scope>NUCLEOTIDE SEQUENCE [LARGE SCALE GENOMIC DNA]</scope>
    <source>
        <strain>ATCC 35395 / DSM 2834 / JCM 12185 / C2A</strain>
    </source>
</reference>
<keyword id="KW-0238">DNA-binding</keyword>
<keyword id="KW-0479">Metal-binding</keyword>
<keyword id="KW-0533">Nickel</keyword>
<keyword id="KW-1185">Reference proteome</keyword>
<keyword id="KW-0804">Transcription</keyword>
<keyword id="KW-0805">Transcription regulation</keyword>
<name>NIKR2_METAC</name>
<evidence type="ECO:0000250" key="1"/>
<evidence type="ECO:0000305" key="2"/>
<comment type="function">
    <text evidence="2">Transcriptional regulator.</text>
</comment>
<comment type="cofactor">
    <cofactor evidence="1">
        <name>Ni(2+)</name>
        <dbReference type="ChEBI" id="CHEBI:49786"/>
    </cofactor>
    <text evidence="1">Binds 1 nickel ion per subunit.</text>
</comment>
<comment type="similarity">
    <text evidence="2">Belongs to the transcriptional regulatory CopG/NikR family.</text>
</comment>
<sequence>MEKKLMRIGVSLPGELLDKFDKTLMKRGYSSRSEGIRDAIRTYNQHYEWMQQIKGARAATISLVYDCSKKGITSTLAKIQHEYIDLITSSVHFHIEEDFCFETIILEGEGEKIVELAEKILSLKGVKHSRLTTMPEVKTE</sequence>
<accession>Q8TM54</accession>